<comment type="function">
    <text evidence="3 4 5 6">Plays a role in the inhibition of host immune response. Binds specifically to transporters associated with antigen processing (TAP), thereby blocking peptide-binding and translocation by TAP as well as subsequent loading of peptides onto MHC class I molecules. Empty MHC I molecules are retained in the endoplasmic reticulum and ultimately directed to proteasomal degradation. In consequence, infected cells are masked for immune recognition by cytotoxic T-lymphocytes.</text>
</comment>
<comment type="subunit">
    <text evidence="4">Interacts with host TAP1 and TAP2; these interactions inhibit the loading of peptides onto MHC class I molecules.</text>
</comment>
<comment type="subcellular location">
    <subcellularLocation>
        <location evidence="5">Host cytoplasm</location>
    </subcellularLocation>
    <subcellularLocation>
        <location evidence="5">Host nucleus</location>
    </subcellularLocation>
</comment>
<comment type="domain">
    <text evidence="1">The N-terminal active domain blocks peptide binding to and peptide transport by TAP.</text>
</comment>
<comment type="similarity">
    <text evidence="8">Belongs to the herpesviridae US12 family.</text>
</comment>
<sequence length="88" mass="9793">MSWALEMADTFLDTMRVGPRTYADVRDEINKRGREDREAARTAVHDPERPLLRSPGLLPEIAPNASLGVAHRRTGGTVTDSPRNPVTR</sequence>
<proteinExistence type="evidence at protein level"/>
<feature type="chain" id="PRO_0000115810" description="ICP47 protein">
    <location>
        <begin position="1"/>
        <end position="88"/>
    </location>
</feature>
<feature type="region of interest" description="Active domain" evidence="1">
    <location>
        <begin position="2"/>
        <end position="35"/>
    </location>
</feature>
<feature type="region of interest" description="Disordered" evidence="2">
    <location>
        <begin position="33"/>
        <end position="88"/>
    </location>
</feature>
<feature type="compositionally biased region" description="Basic and acidic residues" evidence="2">
    <location>
        <begin position="33"/>
        <end position="51"/>
    </location>
</feature>
<feature type="compositionally biased region" description="Polar residues" evidence="2">
    <location>
        <begin position="76"/>
        <end position="88"/>
    </location>
</feature>
<feature type="site" description="Binding to TAP1 subunit" evidence="1">
    <location>
        <position position="22"/>
    </location>
</feature>
<feature type="mutagenesis site" description="Reduced ability to inhibit peptide-binding to TAP." evidence="7">
    <original>D</original>
    <variation>G</variation>
    <location>
        <position position="24"/>
    </location>
</feature>
<feature type="mutagenesis site" description="Reduced ability to inhibit peptide-binding to TAP." evidence="7">
    <original>K</original>
    <variation>G</variation>
    <location>
        <position position="31"/>
    </location>
</feature>
<feature type="mutagenesis site" description="Reduced ability to inhibit peptide-binding to TAP." evidence="7">
    <original>R</original>
    <variation>G</variation>
    <location>
        <position position="32"/>
    </location>
</feature>
<feature type="sequence conflict" description="In Ref. 1 and 7." evidence="8" ref="1 7">
    <original>T</original>
    <variation>N</variation>
    <location>
        <position position="14"/>
    </location>
</feature>
<feature type="helix" evidence="9">
    <location>
        <begin position="5"/>
        <end position="13"/>
    </location>
</feature>
<feature type="strand" evidence="9">
    <location>
        <begin position="16"/>
        <end position="18"/>
    </location>
</feature>
<feature type="helix" evidence="9">
    <location>
        <begin position="22"/>
        <end position="31"/>
    </location>
</feature>
<accession>P03170</accession>
<accession>Q99BW2</accession>
<accession>Q9E0N0</accession>
<accession>Q9E0N1</accession>
<gene>
    <name type="primary">US12</name>
</gene>
<protein>
    <recommendedName>
        <fullName>ICP47 protein</fullName>
    </recommendedName>
    <alternativeName>
        <fullName>Immediate-early protein IE12</fullName>
    </alternativeName>
    <alternativeName>
        <fullName>Immediate-early-5</fullName>
    </alternativeName>
    <alternativeName>
        <fullName>Infected cell protein 47</fullName>
    </alternativeName>
    <alternativeName>
        <fullName>US12 protein</fullName>
    </alternativeName>
    <alternativeName>
        <fullName>Vmw12</fullName>
    </alternativeName>
</protein>
<dbReference type="EMBL" id="J02220">
    <property type="protein sequence ID" value="AAA45795.1"/>
    <property type="molecule type" value="Genomic_DNA"/>
</dbReference>
<dbReference type="EMBL" id="L00036">
    <property type="protein sequence ID" value="AAA96676.1"/>
    <property type="molecule type" value="Genomic_DNA"/>
</dbReference>
<dbReference type="EMBL" id="X00428">
    <property type="protein sequence ID" value="CAA25124.1"/>
    <property type="molecule type" value="Genomic_RNA"/>
</dbReference>
<dbReference type="EMBL" id="X02138">
    <property type="protein sequence ID" value="CAA26066.1"/>
    <property type="molecule type" value="Genomic_DNA"/>
</dbReference>
<dbReference type="EMBL" id="X14112">
    <property type="protein sequence ID" value="CAA32277.1"/>
    <property type="molecule type" value="Genomic_DNA"/>
</dbReference>
<dbReference type="EMBL" id="V00462">
    <property type="protein sequence ID" value="CAA23737.1"/>
    <property type="molecule type" value="Genomic_DNA"/>
</dbReference>
<dbReference type="EMBL" id="AF290017">
    <property type="protein sequence ID" value="AAG33133.1"/>
    <property type="molecule type" value="Genomic_DNA"/>
</dbReference>
<dbReference type="EMBL" id="AF290018">
    <property type="protein sequence ID" value="AAG33134.1"/>
    <property type="molecule type" value="Genomic_DNA"/>
</dbReference>
<dbReference type="EMBL" id="AF324428">
    <property type="protein sequence ID" value="AAK12110.1"/>
    <property type="molecule type" value="Genomic_DNA"/>
</dbReference>
<dbReference type="PIR" id="A93454">
    <property type="entry name" value="EDBE51"/>
</dbReference>
<dbReference type="RefSeq" id="YP_009137148.1">
    <property type="nucleotide sequence ID" value="NC_001806.2"/>
</dbReference>
<dbReference type="PDB" id="1QLO">
    <property type="method" value="NMR"/>
    <property type="chains" value="A=1-34"/>
</dbReference>
<dbReference type="PDBsum" id="1QLO"/>
<dbReference type="BMRB" id="P03170"/>
<dbReference type="SMR" id="P03170"/>
<dbReference type="DIP" id="DIP-61932N"/>
<dbReference type="IntAct" id="P03170">
    <property type="interactions" value="2"/>
</dbReference>
<dbReference type="TCDB" id="8.A.72.1.1">
    <property type="family name" value="the immune evasion protein, icp47 (icp47) family"/>
</dbReference>
<dbReference type="DNASU" id="2703441"/>
<dbReference type="GeneID" id="2703441"/>
<dbReference type="KEGG" id="vg:2703441"/>
<dbReference type="Proteomes" id="UP000009294">
    <property type="component" value="Segment"/>
</dbReference>
<dbReference type="GO" id="GO:0005789">
    <property type="term" value="C:endoplasmic reticulum membrane"/>
    <property type="evidence" value="ECO:0000305"/>
    <property type="project" value="UniProt"/>
</dbReference>
<dbReference type="GO" id="GO:0030430">
    <property type="term" value="C:host cell cytoplasm"/>
    <property type="evidence" value="ECO:0007669"/>
    <property type="project" value="UniProtKB-SubCell"/>
</dbReference>
<dbReference type="GO" id="GO:0042025">
    <property type="term" value="C:host cell nucleus"/>
    <property type="evidence" value="ECO:0007669"/>
    <property type="project" value="UniProtKB-SubCell"/>
</dbReference>
<dbReference type="GO" id="GO:0008289">
    <property type="term" value="F:lipid binding"/>
    <property type="evidence" value="ECO:0000314"/>
    <property type="project" value="DisProt"/>
</dbReference>
<dbReference type="GO" id="GO:0140313">
    <property type="term" value="F:molecular sequestering activity"/>
    <property type="evidence" value="ECO:0000314"/>
    <property type="project" value="DisProt"/>
</dbReference>
<dbReference type="GO" id="GO:0005543">
    <property type="term" value="F:phospholipid binding"/>
    <property type="evidence" value="ECO:0000314"/>
    <property type="project" value="DisProt"/>
</dbReference>
<dbReference type="GO" id="GO:0046977">
    <property type="term" value="F:TAP binding"/>
    <property type="evidence" value="ECO:0000314"/>
    <property type="project" value="DisProt"/>
</dbReference>
<dbReference type="GO" id="GO:0141028">
    <property type="term" value="P:symbiont-mediated perturbation of host microtubule cytoskeleton"/>
    <property type="evidence" value="ECO:0000269"/>
    <property type="project" value="SigSci"/>
</dbReference>
<dbReference type="GO" id="GO:0046776">
    <property type="term" value="P:symbiont-mediated suppression of host antigen processing and presentation of peptide antigen via MHC class I"/>
    <property type="evidence" value="ECO:0000314"/>
    <property type="project" value="UniProt"/>
</dbReference>
<dbReference type="InterPro" id="IPR008026">
    <property type="entry name" value="Herpes_ICP47"/>
</dbReference>
<dbReference type="Pfam" id="PF05363">
    <property type="entry name" value="Herpes_US12"/>
    <property type="match status" value="1"/>
</dbReference>
<reference key="1">
    <citation type="journal article" date="1982" name="Nucleic Acids Res.">
        <title>DNA sequence of an immediate-early gene (IEmRNA-5) of herpes simplex virus type I.</title>
        <authorList>
            <person name="Watson R.J."/>
            <person name="Vande Woude G.F."/>
        </authorList>
    </citation>
    <scope>NUCLEOTIDE SEQUENCE [GENOMIC DNA]</scope>
</reference>
<reference key="2">
    <citation type="journal article" date="1982" name="J. Gen. Virol.">
        <title>DNA sequence analysis of an immediate-early gene region of the herpes simplex virus type 1 genome (map coordinates 0.950 to 0.978).</title>
        <authorList>
            <person name="Murchie M.-J."/>
            <person name="McGeoch D.J."/>
        </authorList>
    </citation>
    <scope>NUCLEOTIDE SEQUENCE [GENOMIC DNA]</scope>
</reference>
<reference key="3">
    <citation type="journal article" date="1984" name="Nucleic Acids Res.">
        <title>A 3' co-terminal family of mRNAs from the herpes simplex virus type 1 short region: two overlapping reading frames encode unrelated polypeptide one of which has highly reiterated amino acid sequence.</title>
        <authorList>
            <person name="Rixon F.J."/>
            <person name="McGeoch D.J."/>
        </authorList>
    </citation>
    <scope>NUCLEOTIDE SEQUENCE [GENOMIC DNA]</scope>
</reference>
<reference key="4">
    <citation type="journal article" date="1985" name="J. Mol. Biol.">
        <title>Sequence determination and genetic content of the short unique region in the genome of herpes simplex virus type 1.</title>
        <authorList>
            <person name="McGeoch D.J."/>
            <person name="Dolan A."/>
            <person name="Donald S."/>
            <person name="Rixon F.J."/>
        </authorList>
    </citation>
    <scope>NUCLEOTIDE SEQUENCE [GENOMIC DNA]</scope>
</reference>
<reference key="5">
    <citation type="journal article" date="1988" name="J. Gen. Virol.">
        <title>The DNA sequences of the long repeat region and adjoining parts of the long unique region in the genome of herpes simplex virus type 1.</title>
        <authorList>
            <person name="Perry L.J."/>
            <person name="McGeoch D.J."/>
        </authorList>
    </citation>
    <scope>NUCLEOTIDE SEQUENCE [GENOMIC DNA]</scope>
</reference>
<reference key="6">
    <citation type="journal article" date="1981" name="Nucleic Acids Res.">
        <title>Reiterated sequences within the intron of an immediate-early gene of herpes simplex virus type 1.</title>
        <authorList>
            <person name="Watson R.J."/>
            <person name="Umene K."/>
            <person name="Enquist L.W."/>
        </authorList>
    </citation>
    <scope>NUCLEOTIDE SEQUENCE [GENOMIC DNA] OF 1-55</scope>
</reference>
<reference key="7">
    <citation type="journal article" date="2000" name="Ann. Neurol.">
        <title>Herpes simplex virus type 1 (HSV-1)-induced retinitis following herpes simplex encephalitis: indications for brain-to-eye transmission of HSV-1.</title>
        <authorList>
            <person name="Maertzdorf J."/>
            <person name="Van der Lelij A."/>
            <person name="Baarsma G.S."/>
            <person name="Osterhaus A.D.M.E."/>
            <person name="Verjans G.M.G.M."/>
        </authorList>
    </citation>
    <scope>NUCLEOTIDE SEQUENCE [GENOMIC DNA] OF 1-14</scope>
</reference>
<reference key="8">
    <citation type="journal article" date="2001" name="Lancet">
        <title>Herpes simplex virus type 1 transmission through corneal transplantation.</title>
        <authorList>
            <person name="Remeijer L."/>
            <person name="Maertzdorf J."/>
            <person name="Doornenbal P."/>
            <person name="Verjans G.M.G.M."/>
            <person name="Osterhaus A.D.M.E."/>
        </authorList>
    </citation>
    <scope>NUCLEOTIDE SEQUENCE [GENOMIC DNA] OF 1-14</scope>
    <source>
        <strain>Isolates D</strain>
        <strain>R</strain>
    </source>
</reference>
<reference key="9">
    <citation type="journal article" date="1994" name="Cell">
        <title>A cytosolic herpes simplex virus protein inhibits antigen presentation to CD8+ T lymphocytes.</title>
        <authorList>
            <person name="York I.A."/>
            <person name="Roop C."/>
            <person name="Andrews D.W."/>
            <person name="Riddell S.R."/>
            <person name="Graham F.L."/>
            <person name="Johnson D.C."/>
        </authorList>
    </citation>
    <scope>FUNCTION</scope>
    <scope>SUBCELLULAR LOCATION</scope>
</reference>
<reference key="10">
    <citation type="journal article" date="1995" name="Nature">
        <title>A viral inhibitor of peptide transporters for antigen presentation.</title>
        <authorList>
            <person name="Frueh K."/>
            <person name="Ahn K."/>
            <person name="Djaballah H."/>
            <person name="Sempe P."/>
            <person name="van Endert P.M."/>
            <person name="Tampe R."/>
            <person name="Peterson P.A."/>
            <person name="Yang Y."/>
        </authorList>
    </citation>
    <scope>FUNCTION</scope>
    <scope>INTERACTION WITH HOST TAP1 AND TAP2</scope>
    <source>
        <strain>Strain F</strain>
    </source>
</reference>
<reference key="11">
    <citation type="journal article" date="1996" name="EMBO J.">
        <title>Molecular mechanism and species specificity of TAP inhibition by herpes simplex virus ICP47.</title>
        <authorList>
            <person name="Ahn K."/>
            <person name="Meyer T.H."/>
            <person name="Uebel S."/>
            <person name="Sempe P."/>
            <person name="Djaballah H."/>
            <person name="Yang Y."/>
            <person name="Peterson P.A."/>
            <person name="Frueh K."/>
            <person name="Tampe R."/>
        </authorList>
    </citation>
    <scope>FUNCTION</scope>
    <source>
        <strain>Strain F</strain>
    </source>
</reference>
<reference key="12">
    <citation type="journal article" date="1997" name="J. Mol. Biol.">
        <title>The active domain of the herpes simplex virus protein ICP47: a potent inhibitor of the transporter associated with antigen processing (TAP).</title>
        <authorList>
            <person name="Neumann L."/>
            <person name="Kraas W."/>
            <person name="Uebel S."/>
            <person name="Jung G."/>
            <person name="Tampe R."/>
        </authorList>
    </citation>
    <scope>ACTIVE DOMAIN</scope>
    <scope>MUTAGENESIS</scope>
    <source>
        <strain>Strain F</strain>
    </source>
</reference>
<reference key="13">
    <citation type="journal article" date="2001" name="J. Reprod. Immunol.">
        <title>Inhibition of antigen transport by expression of infected cell peptide 47 (ICP47) prevents cell surface expression of HLA in choriocarcinoma cell lines.</title>
        <authorList>
            <person name="Easterfield A.J."/>
            <person name="Austen B.M."/>
            <person name="Westwood O.M.R."/>
        </authorList>
    </citation>
    <scope>FUNCTION</scope>
    <source>
        <strain>Strain F</strain>
    </source>
</reference>
<reference key="14">
    <citation type="journal article" date="1999" name="Biochemistry">
        <title>Structure of the active domain of the herpes simplex virus protein ICP47 in water/sodium dodecyl sulfate solution determined by nuclear magnetic resonance spectroscopy.</title>
        <authorList>
            <person name="Pfaender R."/>
            <person name="Neumann L."/>
            <person name="Zweckstetter M."/>
            <person name="Seger C."/>
            <person name="Holak T.A."/>
            <person name="Tampe R."/>
        </authorList>
    </citation>
    <scope>STRUCTURE BY NMR OF 2-34</scope>
</reference>
<name>ICP47_HHV11</name>
<keyword id="KW-0002">3D-structure</keyword>
<keyword id="KW-0244">Early protein</keyword>
<keyword id="KW-1035">Host cytoplasm</keyword>
<keyword id="KW-1048">Host nucleus</keyword>
<keyword id="KW-0945">Host-virus interaction</keyword>
<keyword id="KW-1080">Inhibition of host adaptive immune response by virus</keyword>
<keyword id="KW-1107">Inhibition of host TAP by virus</keyword>
<keyword id="KW-1185">Reference proteome</keyword>
<keyword id="KW-0899">Viral immunoevasion</keyword>
<organism>
    <name type="scientific">Human herpesvirus 1 (strain 17)</name>
    <name type="common">HHV-1</name>
    <name type="synonym">Human herpes simplex virus 1</name>
    <dbReference type="NCBI Taxonomy" id="10299"/>
    <lineage>
        <taxon>Viruses</taxon>
        <taxon>Duplodnaviria</taxon>
        <taxon>Heunggongvirae</taxon>
        <taxon>Peploviricota</taxon>
        <taxon>Herviviricetes</taxon>
        <taxon>Herpesvirales</taxon>
        <taxon>Orthoherpesviridae</taxon>
        <taxon>Alphaherpesvirinae</taxon>
        <taxon>Simplexvirus</taxon>
        <taxon>Simplexvirus humanalpha1</taxon>
        <taxon>Human herpesvirus 1</taxon>
    </lineage>
</organism>
<organismHost>
    <name type="scientific">Homo sapiens</name>
    <name type="common">Human</name>
    <dbReference type="NCBI Taxonomy" id="9606"/>
</organismHost>
<evidence type="ECO:0000250" key="1">
    <source>
        <dbReference type="UniProtKB" id="P14345"/>
    </source>
</evidence>
<evidence type="ECO:0000256" key="2">
    <source>
        <dbReference type="SAM" id="MobiDB-lite"/>
    </source>
</evidence>
<evidence type="ECO:0000269" key="3">
    <source>
    </source>
</evidence>
<evidence type="ECO:0000269" key="4">
    <source>
    </source>
</evidence>
<evidence type="ECO:0000269" key="5">
    <source>
    </source>
</evidence>
<evidence type="ECO:0000269" key="6">
    <source>
    </source>
</evidence>
<evidence type="ECO:0000269" key="7">
    <source>
    </source>
</evidence>
<evidence type="ECO:0000305" key="8"/>
<evidence type="ECO:0007829" key="9">
    <source>
        <dbReference type="PDB" id="1QLO"/>
    </source>
</evidence>